<feature type="chain" id="PRO_0000222999" description="Capsid protein">
    <location>
        <begin position="1"/>
        <end position="449"/>
    </location>
</feature>
<feature type="region of interest" description="DNA-binding" evidence="1">
    <location>
        <begin position="1"/>
        <end position="43"/>
    </location>
</feature>
<feature type="region of interest" description="Nuclear localization signals" evidence="2">
    <location>
        <begin position="6"/>
        <end position="47"/>
    </location>
</feature>
<sequence length="449" mass="51872">MARRARRPRGRFYAFRRGRWHHLKRLRRRYKFRHRRRQRYRRRAFRKAFHNPRPGTYSVRLPNPQSTMTIRFQGVIFLTEGLILPKNSTAGGYADHMYGARVAKISVNLKEFLLASMNLTYVSKIGGPIAGELIADGSKSQAAENWPNCWLPLDNNVPSATPSAWWRWALMMMQPTDSCRFFNHPKQMTLQDMGRMFGGWHLFRHIETRFQLLATKNEGSFSPVASLLSQGEYLTRRDDVKYSSDHQNRWRKGEQPMTGGIAYATGKMRPDEQQYPAMPPDPPIITSTTAQGTQVRCMYSTQAWWSWDTYMSFATLTALGAQWSFPPGQRSVSRRSFNHHKARGAGDPKGQRWHTLVPLGTETITDSYMGAPASELDTNFFTLYVAQGTNKSQQYKFGTATYALKEPVMKSDSWAVVRVQSVWQLGNRQRPYPWDVNWANSTMYWGTQP</sequence>
<proteinExistence type="evidence at transcript level"/>
<dbReference type="EMBL" id="S71488">
    <property type="protein sequence ID" value="AAB30928.1"/>
    <property type="molecule type" value="Genomic_DNA"/>
</dbReference>
<dbReference type="GO" id="GO:0043657">
    <property type="term" value="C:host cell"/>
    <property type="evidence" value="ECO:0007669"/>
    <property type="project" value="GOC"/>
</dbReference>
<dbReference type="GO" id="GO:0042025">
    <property type="term" value="C:host cell nucleus"/>
    <property type="evidence" value="ECO:0007669"/>
    <property type="project" value="UniProtKB-SubCell"/>
</dbReference>
<dbReference type="GO" id="GO:0039615">
    <property type="term" value="C:T=1 icosahedral viral capsid"/>
    <property type="evidence" value="ECO:0007669"/>
    <property type="project" value="UniProtKB-KW"/>
</dbReference>
<dbReference type="GO" id="GO:0003677">
    <property type="term" value="F:DNA binding"/>
    <property type="evidence" value="ECO:0007669"/>
    <property type="project" value="UniProtKB-KW"/>
</dbReference>
<dbReference type="GO" id="GO:0075509">
    <property type="term" value="P:endocytosis involved in viral entry into host cell"/>
    <property type="evidence" value="ECO:0007669"/>
    <property type="project" value="UniProtKB-KW"/>
</dbReference>
<dbReference type="GO" id="GO:0075732">
    <property type="term" value="P:viral penetration into host nucleus"/>
    <property type="evidence" value="ECO:0007669"/>
    <property type="project" value="UniProtKB-KW"/>
</dbReference>
<dbReference type="GO" id="GO:0019062">
    <property type="term" value="P:virion attachment to host cell"/>
    <property type="evidence" value="ECO:0007669"/>
    <property type="project" value="UniProtKB-KW"/>
</dbReference>
<dbReference type="InterPro" id="IPR007291">
    <property type="entry name" value="Capsid_protein"/>
</dbReference>
<dbReference type="Pfam" id="PF04162">
    <property type="entry name" value="Gyro_capsid"/>
    <property type="match status" value="1"/>
</dbReference>
<accession>P54087</accession>
<evidence type="ECO:0000250" key="1"/>
<evidence type="ECO:0000255" key="2"/>
<evidence type="ECO:0000305" key="3"/>
<gene>
    <name type="primary">VP1</name>
</gene>
<keyword id="KW-0167">Capsid protein</keyword>
<keyword id="KW-0238">DNA-binding</keyword>
<keyword id="KW-1048">Host nucleus</keyword>
<keyword id="KW-0945">Host-virus interaction</keyword>
<keyword id="KW-0426">Late protein</keyword>
<keyword id="KW-1140">T=1 icosahedral capsid protein</keyword>
<keyword id="KW-1161">Viral attachment to host cell</keyword>
<keyword id="KW-1162">Viral penetration into host cytoplasm</keyword>
<keyword id="KW-1163">Viral penetration into host nucleus</keyword>
<keyword id="KW-0946">Virion</keyword>
<keyword id="KW-1164">Virus endocytosis by host</keyword>
<keyword id="KW-1160">Virus entry into host cell</keyword>
<protein>
    <recommendedName>
        <fullName>Capsid protein</fullName>
    </recommendedName>
    <alternativeName>
        <fullName>CA1</fullName>
    </alternativeName>
    <alternativeName>
        <fullName>Coat protein</fullName>
    </alternativeName>
</protein>
<name>CAPSD_CAVAU</name>
<organism>
    <name type="scientific">Chicken anemia virus (isolate Australia)</name>
    <name type="common">CAV</name>
    <dbReference type="NCBI Taxonomy" id="73474"/>
    <lineage>
        <taxon>Viruses</taxon>
        <taxon>Viruses incertae sedis</taxon>
        <taxon>Anelloviridae</taxon>
        <taxon>Gyrovirus</taxon>
        <taxon>Gyrovirus chickenanemia</taxon>
    </lineage>
</organism>
<comment type="function">
    <text evidence="1">Self-assembles to form the virion icosahedral capsid with a T=1 symmetry. This very small capsid (25 nm in diameter) allows the virus to be very stable in the environment and resistant to some disinfectants, including detergents. Essential for the initial attachment to host receptors. After attachment, the virus is endocytosed and traffics to the nucleus. The capsid protein binds and transports the viral genome and Rep across the nuclear envelope (By similarity).</text>
</comment>
<comment type="subunit">
    <text evidence="1 3">Homomultimer (Potential). Interacts with Rep; this interaction relocates Rep into the nucleus (By similarity).</text>
</comment>
<comment type="subcellular location">
    <subcellularLocation>
        <location evidence="1">Host nucleus</location>
    </subcellularLocation>
    <subcellularLocation>
        <location evidence="3">Virion</location>
    </subcellularLocation>
</comment>
<comment type="induction">
    <text>VP1 and VP2 are detected 12 hours post infection, while VP3 only after 24 hours.</text>
</comment>
<comment type="similarity">
    <text evidence="3">Belongs to the gyrovirus capsid protein family.</text>
</comment>
<organismHost>
    <name type="scientific">Gallus gallus</name>
    <name type="common">Chicken</name>
    <dbReference type="NCBI Taxonomy" id="9031"/>
</organismHost>
<reference key="1">
    <citation type="journal article" date="1994" name="Vet. Microbiol.">
        <title>Cloning and sequencing of the chicken anaemia virus (CAV) ORF-3 gene, and the development of an ELISA for the detection of serum antibody to CAV.</title>
        <authorList>
            <person name="Pallister J."/>
            <person name="Fahey K.J."/>
            <person name="Sheppard M."/>
        </authorList>
    </citation>
    <scope>NUCLEOTIDE SEQUENCE [GENOMIC DNA]</scope>
</reference>